<evidence type="ECO:0000255" key="1">
    <source>
        <dbReference type="HAMAP-Rule" id="MF_00178"/>
    </source>
</evidence>
<keyword id="KW-1185">Reference proteome</keyword>
<keyword id="KW-0686">Riboflavin biosynthesis</keyword>
<keyword id="KW-0808">Transferase</keyword>
<proteinExistence type="inferred from homology"/>
<dbReference type="EC" id="2.5.1.78" evidence="1"/>
<dbReference type="EMBL" id="AE016877">
    <property type="protein sequence ID" value="AAP11031.1"/>
    <property type="molecule type" value="Genomic_DNA"/>
</dbReference>
<dbReference type="RefSeq" id="NP_833830.1">
    <property type="nucleotide sequence ID" value="NC_004722.1"/>
</dbReference>
<dbReference type="RefSeq" id="WP_000230895.1">
    <property type="nucleotide sequence ID" value="NZ_CP138336.1"/>
</dbReference>
<dbReference type="SMR" id="Q818X5"/>
<dbReference type="STRING" id="226900.BC_4112"/>
<dbReference type="MetOSite" id="Q818X5"/>
<dbReference type="GeneID" id="92883459"/>
<dbReference type="KEGG" id="bce:BC4112"/>
<dbReference type="PATRIC" id="fig|226900.8.peg.4248"/>
<dbReference type="HOGENOM" id="CLU_089358_1_1_9"/>
<dbReference type="OrthoDB" id="9809709at2"/>
<dbReference type="UniPathway" id="UPA00275">
    <property type="reaction ID" value="UER00404"/>
</dbReference>
<dbReference type="Proteomes" id="UP000001417">
    <property type="component" value="Chromosome"/>
</dbReference>
<dbReference type="GO" id="GO:0005737">
    <property type="term" value="C:cytoplasm"/>
    <property type="evidence" value="ECO:0000318"/>
    <property type="project" value="GO_Central"/>
</dbReference>
<dbReference type="GO" id="GO:0005829">
    <property type="term" value="C:cytosol"/>
    <property type="evidence" value="ECO:0000318"/>
    <property type="project" value="GO_Central"/>
</dbReference>
<dbReference type="GO" id="GO:0009349">
    <property type="term" value="C:riboflavin synthase complex"/>
    <property type="evidence" value="ECO:0007669"/>
    <property type="project" value="InterPro"/>
</dbReference>
<dbReference type="GO" id="GO:0000906">
    <property type="term" value="F:6,7-dimethyl-8-ribityllumazine synthase activity"/>
    <property type="evidence" value="ECO:0000318"/>
    <property type="project" value="GO_Central"/>
</dbReference>
<dbReference type="GO" id="GO:0009231">
    <property type="term" value="P:riboflavin biosynthetic process"/>
    <property type="evidence" value="ECO:0000318"/>
    <property type="project" value="GO_Central"/>
</dbReference>
<dbReference type="CDD" id="cd09209">
    <property type="entry name" value="Lumazine_synthase-I"/>
    <property type="match status" value="1"/>
</dbReference>
<dbReference type="FunFam" id="3.40.50.960:FF:000001">
    <property type="entry name" value="6,7-dimethyl-8-ribityllumazine synthase"/>
    <property type="match status" value="1"/>
</dbReference>
<dbReference type="Gene3D" id="3.40.50.960">
    <property type="entry name" value="Lumazine/riboflavin synthase"/>
    <property type="match status" value="1"/>
</dbReference>
<dbReference type="HAMAP" id="MF_00178">
    <property type="entry name" value="Lumazine_synth"/>
    <property type="match status" value="1"/>
</dbReference>
<dbReference type="InterPro" id="IPR034964">
    <property type="entry name" value="LS"/>
</dbReference>
<dbReference type="InterPro" id="IPR002180">
    <property type="entry name" value="LS/RS"/>
</dbReference>
<dbReference type="InterPro" id="IPR036467">
    <property type="entry name" value="LS/RS_sf"/>
</dbReference>
<dbReference type="NCBIfam" id="TIGR00114">
    <property type="entry name" value="lumazine-synth"/>
    <property type="match status" value="1"/>
</dbReference>
<dbReference type="NCBIfam" id="NF000812">
    <property type="entry name" value="PRK00061.1-4"/>
    <property type="match status" value="1"/>
</dbReference>
<dbReference type="PANTHER" id="PTHR21058:SF0">
    <property type="entry name" value="6,7-DIMETHYL-8-RIBITYLLUMAZINE SYNTHASE"/>
    <property type="match status" value="1"/>
</dbReference>
<dbReference type="PANTHER" id="PTHR21058">
    <property type="entry name" value="6,7-DIMETHYL-8-RIBITYLLUMAZINE SYNTHASE DMRL SYNTHASE LUMAZINE SYNTHASE"/>
    <property type="match status" value="1"/>
</dbReference>
<dbReference type="Pfam" id="PF00885">
    <property type="entry name" value="DMRL_synthase"/>
    <property type="match status" value="1"/>
</dbReference>
<dbReference type="SUPFAM" id="SSF52121">
    <property type="entry name" value="Lumazine synthase"/>
    <property type="match status" value="1"/>
</dbReference>
<sequence length="153" mass="16249">MVFEGHLVGTGLKVGVVVGRFNEFITSKLLGGALDGLKRHGVEENDIDVAWVPGAFEIPLIAKKMASSGKYDAVITLGTVIRGATTHYDYVCNEVAKGVASLSLQMDIPVIFGVLTTETIEQAIERAGTKAGNKGYESAVAAIEMAHLSKQWA</sequence>
<comment type="function">
    <text evidence="1">Catalyzes the formation of 6,7-dimethyl-8-ribityllumazine by condensation of 5-amino-6-(D-ribitylamino)uracil with 3,4-dihydroxy-2-butanone 4-phosphate. This is the penultimate step in the biosynthesis of riboflavin.</text>
</comment>
<comment type="catalytic activity">
    <reaction evidence="1">
        <text>(2S)-2-hydroxy-3-oxobutyl phosphate + 5-amino-6-(D-ribitylamino)uracil = 6,7-dimethyl-8-(1-D-ribityl)lumazine + phosphate + 2 H2O + H(+)</text>
        <dbReference type="Rhea" id="RHEA:26152"/>
        <dbReference type="ChEBI" id="CHEBI:15377"/>
        <dbReference type="ChEBI" id="CHEBI:15378"/>
        <dbReference type="ChEBI" id="CHEBI:15934"/>
        <dbReference type="ChEBI" id="CHEBI:43474"/>
        <dbReference type="ChEBI" id="CHEBI:58201"/>
        <dbReference type="ChEBI" id="CHEBI:58830"/>
        <dbReference type="EC" id="2.5.1.78"/>
    </reaction>
</comment>
<comment type="pathway">
    <text evidence="1">Cofactor biosynthesis; riboflavin biosynthesis; riboflavin from 2-hydroxy-3-oxobutyl phosphate and 5-amino-6-(D-ribitylamino)uracil: step 1/2.</text>
</comment>
<comment type="subunit">
    <text evidence="1">Forms an icosahedral capsid composed of 60 subunits, arranged as a dodecamer of pentamers.</text>
</comment>
<comment type="similarity">
    <text evidence="1">Belongs to the DMRL synthase family.</text>
</comment>
<organism>
    <name type="scientific">Bacillus cereus (strain ATCC 14579 / DSM 31 / CCUG 7414 / JCM 2152 / NBRC 15305 / NCIMB 9373 / NCTC 2599 / NRRL B-3711)</name>
    <dbReference type="NCBI Taxonomy" id="226900"/>
    <lineage>
        <taxon>Bacteria</taxon>
        <taxon>Bacillati</taxon>
        <taxon>Bacillota</taxon>
        <taxon>Bacilli</taxon>
        <taxon>Bacillales</taxon>
        <taxon>Bacillaceae</taxon>
        <taxon>Bacillus</taxon>
        <taxon>Bacillus cereus group</taxon>
    </lineage>
</organism>
<accession>Q818X5</accession>
<name>RISB_BACCR</name>
<reference key="1">
    <citation type="journal article" date="2003" name="Nature">
        <title>Genome sequence of Bacillus cereus and comparative analysis with Bacillus anthracis.</title>
        <authorList>
            <person name="Ivanova N."/>
            <person name="Sorokin A."/>
            <person name="Anderson I."/>
            <person name="Galleron N."/>
            <person name="Candelon B."/>
            <person name="Kapatral V."/>
            <person name="Bhattacharyya A."/>
            <person name="Reznik G."/>
            <person name="Mikhailova N."/>
            <person name="Lapidus A."/>
            <person name="Chu L."/>
            <person name="Mazur M."/>
            <person name="Goltsman E."/>
            <person name="Larsen N."/>
            <person name="D'Souza M."/>
            <person name="Walunas T."/>
            <person name="Grechkin Y."/>
            <person name="Pusch G."/>
            <person name="Haselkorn R."/>
            <person name="Fonstein M."/>
            <person name="Ehrlich S.D."/>
            <person name="Overbeek R."/>
            <person name="Kyrpides N.C."/>
        </authorList>
    </citation>
    <scope>NUCLEOTIDE SEQUENCE [LARGE SCALE GENOMIC DNA]</scope>
    <source>
        <strain>ATCC 14579 / DSM 31 / CCUG 7414 / JCM 2152 / NBRC 15305 / NCIMB 9373 / NCTC 2599 / NRRL B-3711</strain>
    </source>
</reference>
<feature type="chain" id="PRO_0000134713" description="6,7-dimethyl-8-ribityllumazine synthase">
    <location>
        <begin position="1"/>
        <end position="153"/>
    </location>
</feature>
<feature type="active site" description="Proton donor" evidence="1">
    <location>
        <position position="87"/>
    </location>
</feature>
<feature type="binding site" evidence="1">
    <location>
        <position position="21"/>
    </location>
    <ligand>
        <name>5-amino-6-(D-ribitylamino)uracil</name>
        <dbReference type="ChEBI" id="CHEBI:15934"/>
    </ligand>
</feature>
<feature type="binding site" evidence="1">
    <location>
        <begin position="55"/>
        <end position="57"/>
    </location>
    <ligand>
        <name>5-amino-6-(D-ribitylamino)uracil</name>
        <dbReference type="ChEBI" id="CHEBI:15934"/>
    </ligand>
</feature>
<feature type="binding site" evidence="1">
    <location>
        <begin position="79"/>
        <end position="81"/>
    </location>
    <ligand>
        <name>5-amino-6-(D-ribitylamino)uracil</name>
        <dbReference type="ChEBI" id="CHEBI:15934"/>
    </ligand>
</feature>
<feature type="binding site" evidence="1">
    <location>
        <begin position="84"/>
        <end position="85"/>
    </location>
    <ligand>
        <name>(2S)-2-hydroxy-3-oxobutyl phosphate</name>
        <dbReference type="ChEBI" id="CHEBI:58830"/>
    </ligand>
</feature>
<feature type="binding site" evidence="1">
    <location>
        <position position="112"/>
    </location>
    <ligand>
        <name>5-amino-6-(D-ribitylamino)uracil</name>
        <dbReference type="ChEBI" id="CHEBI:15934"/>
    </ligand>
</feature>
<feature type="binding site" evidence="1">
    <location>
        <position position="126"/>
    </location>
    <ligand>
        <name>(2S)-2-hydroxy-3-oxobutyl phosphate</name>
        <dbReference type="ChEBI" id="CHEBI:58830"/>
    </ligand>
</feature>
<protein>
    <recommendedName>
        <fullName evidence="1">6,7-dimethyl-8-ribityllumazine synthase</fullName>
        <shortName evidence="1">DMRL synthase</shortName>
        <shortName evidence="1">LS</shortName>
        <shortName evidence="1">Lumazine synthase</shortName>
        <ecNumber evidence="1">2.5.1.78</ecNumber>
    </recommendedName>
</protein>
<gene>
    <name evidence="1" type="primary">ribH</name>
    <name type="ordered locus">BC_4112</name>
</gene>